<reference key="1">
    <citation type="journal article" date="2000" name="J. Mol. Evol.">
        <title>Comparative genomics of mitochondrial DNA in Drosophila simulans.</title>
        <authorList>
            <person name="Ballard J.W."/>
        </authorList>
    </citation>
    <scope>NUCLEOTIDE SEQUENCE [LARGE SCALE GENOMIC DNA]</scope>
    <source>
        <strain>C167</strain>
        <strain>DSR</strain>
        <strain>DSW</strain>
        <strain>HW00</strain>
        <strain>HW09</strain>
        <strain>MD106</strain>
        <strain>MD111</strain>
        <strain>MD112</strain>
        <strain>MD199</strain>
        <strain>MD221</strain>
        <strain>MD225</strain>
        <strain>MDW86</strain>
        <strain>NC37</strain>
        <strain>NC48</strain>
        <strain>RU00</strain>
        <strain>RU01</strain>
        <strain>RU07</strain>
        <strain>RU259</strain>
        <strain>RU35</strain>
        <strain>SC00</strain>
        <strain>TT00</strain>
        <strain>TT01</strain>
    </source>
</reference>
<reference evidence="6" key="2">
    <citation type="journal article" date="2004" name="Mol. Biol. Evol.">
        <title>Sequential evolution of a symbiont inferred from the host: Wolbachia and Drosophila simulans.</title>
        <authorList>
            <person name="Ballard J.W.O."/>
        </authorList>
    </citation>
    <scope>NUCLEOTIDE SEQUENCE [LARGE SCALE GENOMIC DNA]</scope>
    <source>
        <strain evidence="12">AU023</strain>
        <strain evidence="8">KY007</strain>
        <strain evidence="9">KY045</strain>
        <strain evidence="11">KY201</strain>
        <strain evidence="10">KY215</strain>
    </source>
</reference>
<reference evidence="6" key="3">
    <citation type="journal article" date="2003" name="Mol. Phylogenet. Evol.">
        <title>Macroevolutionary relationships of species of Drosophila melanogaster group based on mtDNA sequences.</title>
        <authorList>
            <person name="Kastanis P."/>
            <person name="Eliopoulos E."/>
            <person name="Goulielmos G.N."/>
            <person name="Tsakas S."/>
            <person name="Loukas M."/>
        </authorList>
    </citation>
    <scope>NUCLEOTIDE SEQUENCE [GENOMIC DNA] OF 352-378</scope>
</reference>
<name>CYB_DROSI</name>
<proteinExistence type="inferred from homology"/>
<evidence type="ECO:0000250" key="1"/>
<evidence type="ECO:0000250" key="2">
    <source>
        <dbReference type="UniProtKB" id="P00157"/>
    </source>
</evidence>
<evidence type="ECO:0000250" key="3">
    <source>
        <dbReference type="UniProtKB" id="P00163"/>
    </source>
</evidence>
<evidence type="ECO:0000255" key="4">
    <source>
        <dbReference type="PROSITE-ProRule" id="PRU00967"/>
    </source>
</evidence>
<evidence type="ECO:0000255" key="5">
    <source>
        <dbReference type="PROSITE-ProRule" id="PRU00968"/>
    </source>
</evidence>
<evidence type="ECO:0000305" key="6"/>
<evidence type="ECO:0000312" key="7">
    <source>
        <dbReference type="EMBL" id="AAF77458.1"/>
    </source>
</evidence>
<evidence type="ECO:0000312" key="8">
    <source>
        <dbReference type="EMBL" id="AAR91392.1"/>
    </source>
</evidence>
<evidence type="ECO:0000312" key="9">
    <source>
        <dbReference type="EMBL" id="AAR91412.1"/>
    </source>
</evidence>
<evidence type="ECO:0000312" key="10">
    <source>
        <dbReference type="EMBL" id="AAR91425.1"/>
    </source>
</evidence>
<evidence type="ECO:0000312" key="11">
    <source>
        <dbReference type="EMBL" id="AAR91438.1"/>
    </source>
</evidence>
<evidence type="ECO:0000312" key="12">
    <source>
        <dbReference type="EMBL" id="AAR91451.1"/>
    </source>
</evidence>
<comment type="function">
    <text evidence="2">Component of the ubiquinol-cytochrome c reductase complex (complex III or cytochrome b-c1 complex) that is part of the mitochondrial respiratory chain. The b-c1 complex mediates electron transfer from ubiquinol to cytochrome c. Contributes to the generation of a proton gradient across the mitochondrial membrane that is then used for ATP synthesis.</text>
</comment>
<comment type="cofactor">
    <cofactor evidence="2">
        <name>heme b</name>
        <dbReference type="ChEBI" id="CHEBI:60344"/>
    </cofactor>
    <text evidence="2">Binds 2 heme b groups non-covalently.</text>
</comment>
<comment type="subunit">
    <text evidence="2">The main subunits of complex b-c1 are: cytochrome b, cytochrome c1 and the Rieske protein.</text>
</comment>
<comment type="subcellular location">
    <subcellularLocation>
        <location evidence="3">Mitochondrion inner membrane</location>
        <topology evidence="3">Multi-pass membrane protein</topology>
    </subcellularLocation>
</comment>
<comment type="miscellaneous">
    <text evidence="1">Heme 1 (or BL or b562) is low-potential and absorbs at about 562 nm, and heme 2 (or BH or b566) is high-potential and absorbs at about 566 nm.</text>
</comment>
<comment type="similarity">
    <text evidence="4 5 6">Belongs to the cytochrome b family.</text>
</comment>
<comment type="caution">
    <text evidence="2">The full-length protein contains only eight transmembrane helices, not nine as predicted by bioinformatics tools.</text>
</comment>
<feature type="chain" id="PRO_0000060896" description="Cytochrome b">
    <location>
        <begin position="1"/>
        <end position="378"/>
    </location>
</feature>
<feature type="transmembrane region" description="Helical" evidence="2">
    <location>
        <begin position="34"/>
        <end position="54"/>
    </location>
</feature>
<feature type="transmembrane region" description="Helical" evidence="2">
    <location>
        <begin position="78"/>
        <end position="99"/>
    </location>
</feature>
<feature type="transmembrane region" description="Helical" evidence="2">
    <location>
        <begin position="114"/>
        <end position="134"/>
    </location>
</feature>
<feature type="transmembrane region" description="Helical" evidence="2">
    <location>
        <begin position="179"/>
        <end position="199"/>
    </location>
</feature>
<feature type="transmembrane region" description="Helical" evidence="2">
    <location>
        <begin position="227"/>
        <end position="247"/>
    </location>
</feature>
<feature type="transmembrane region" description="Helical" evidence="2">
    <location>
        <begin position="289"/>
        <end position="309"/>
    </location>
</feature>
<feature type="transmembrane region" description="Helical" evidence="2">
    <location>
        <begin position="321"/>
        <end position="341"/>
    </location>
</feature>
<feature type="transmembrane region" description="Helical" evidence="2">
    <location>
        <begin position="348"/>
        <end position="368"/>
    </location>
</feature>
<feature type="binding site" description="axial binding residue" evidence="2">
    <location>
        <position position="84"/>
    </location>
    <ligand>
        <name>heme b</name>
        <dbReference type="ChEBI" id="CHEBI:60344"/>
        <label>b562</label>
    </ligand>
    <ligandPart>
        <name>Fe</name>
        <dbReference type="ChEBI" id="CHEBI:18248"/>
    </ligandPart>
</feature>
<feature type="binding site" description="axial binding residue" evidence="2">
    <location>
        <position position="98"/>
    </location>
    <ligand>
        <name>heme b</name>
        <dbReference type="ChEBI" id="CHEBI:60344"/>
        <label>b566</label>
    </ligand>
    <ligandPart>
        <name>Fe</name>
        <dbReference type="ChEBI" id="CHEBI:18248"/>
    </ligandPart>
</feature>
<feature type="binding site" description="axial binding residue" evidence="2">
    <location>
        <position position="183"/>
    </location>
    <ligand>
        <name>heme b</name>
        <dbReference type="ChEBI" id="CHEBI:60344"/>
        <label>b562</label>
    </ligand>
    <ligandPart>
        <name>Fe</name>
        <dbReference type="ChEBI" id="CHEBI:18248"/>
    </ligandPart>
</feature>
<feature type="binding site" description="axial binding residue" evidence="2">
    <location>
        <position position="197"/>
    </location>
    <ligand>
        <name>heme b</name>
        <dbReference type="ChEBI" id="CHEBI:60344"/>
        <label>b566</label>
    </ligand>
    <ligandPart>
        <name>Fe</name>
        <dbReference type="ChEBI" id="CHEBI:18248"/>
    </ligandPart>
</feature>
<feature type="binding site" evidence="2">
    <location>
        <position position="202"/>
    </location>
    <ligand>
        <name>a ubiquinone</name>
        <dbReference type="ChEBI" id="CHEBI:16389"/>
    </ligand>
</feature>
<feature type="sequence variant" description="In strain: RU259." evidence="6">
    <original>C</original>
    <variation>Y</variation>
    <location>
        <position position="71"/>
    </location>
</feature>
<feature type="sequence variant" description="In strain: MD111, MD112, MD199, MD221, MDW86, RU00, RU01, RU07 and RU259." evidence="6">
    <original>V</original>
    <variation>M</variation>
    <location>
        <position position="235"/>
    </location>
</feature>
<feature type="sequence variant" description="In strain: NC37, NC48, TT00, TT01, HW00 and HW09." evidence="6">
    <original>V</original>
    <variation>I</variation>
    <location>
        <position position="357"/>
    </location>
</feature>
<feature type="sequence variant" description="In strain: NC37." evidence="6">
    <original>T</original>
    <variation>M</variation>
    <location>
        <position position="370"/>
    </location>
</feature>
<accession>Q9MDZ9</accession>
<accession>Q9MD69</accession>
<accession>Q9ME00</accession>
<accession>Q9MGK5</accession>
<accession>Q9MGK9</accession>
<accession>Q9MI10</accession>
<geneLocation type="mitochondrion" evidence="7"/>
<sequence>MNKPLRNSHPLFKIANNALVDLPAPINISSWWNFGSLLGLCLIIQILTGLFLAMHYTADINLAFYSVNHICRDVNYGWLLRTLHANGASFFFICIYLHVGRGIYYGSYMFTPTWLIGVIILFLVMGTAFMGYVLPWGQMSFWGATVITNLLSAIPYLGMDLVQWLWGGFAVDNATLTRFFTFHFILPFIVLAMTMIHLLFLHQTGSNNPIGLNSNIDKIPFHPYFTFKDIVGFIVMIFILISLVLISPNLLGDPDNFIPANPLVTPAHIQPEWYFLFAYAILRSIPNKLGGVIALVLSIAILMILPFYNLSKFRGIQFYPINQVMFWSMLVTVILLTWIGARPVEEPYVLIGQILTVVYFLYYLVNPLITKWWDNLLN</sequence>
<keyword id="KW-0249">Electron transport</keyword>
<keyword id="KW-0349">Heme</keyword>
<keyword id="KW-0408">Iron</keyword>
<keyword id="KW-0472">Membrane</keyword>
<keyword id="KW-0479">Metal-binding</keyword>
<keyword id="KW-0496">Mitochondrion</keyword>
<keyword id="KW-0999">Mitochondrion inner membrane</keyword>
<keyword id="KW-1185">Reference proteome</keyword>
<keyword id="KW-0679">Respiratory chain</keyword>
<keyword id="KW-0812">Transmembrane</keyword>
<keyword id="KW-1133">Transmembrane helix</keyword>
<keyword id="KW-0813">Transport</keyword>
<keyword id="KW-0830">Ubiquinone</keyword>
<gene>
    <name type="primary">mt:Cyt-b</name>
    <name type="synonym">Cob</name>
    <name type="synonym">cytb</name>
</gene>
<dbReference type="EMBL" id="AF200833">
    <property type="protein sequence ID" value="AAF77302.1"/>
    <property type="molecule type" value="Genomic_DNA"/>
</dbReference>
<dbReference type="EMBL" id="AF200834">
    <property type="protein sequence ID" value="AAF77305.1"/>
    <property type="molecule type" value="Genomic_DNA"/>
</dbReference>
<dbReference type="EMBL" id="AF200835">
    <property type="protein sequence ID" value="AAF77317.1"/>
    <property type="molecule type" value="Genomic_DNA"/>
</dbReference>
<dbReference type="EMBL" id="AF200836">
    <property type="protein sequence ID" value="AAF77341.1"/>
    <property type="molecule type" value="Genomic_DNA"/>
</dbReference>
<dbReference type="EMBL" id="AF200837">
    <property type="protein sequence ID" value="AAF77354.1"/>
    <property type="molecule type" value="Genomic_DNA"/>
</dbReference>
<dbReference type="EMBL" id="AF200838">
    <property type="protein sequence ID" value="AAF77366.1"/>
    <property type="molecule type" value="Genomic_DNA"/>
</dbReference>
<dbReference type="EMBL" id="AF200839">
    <property type="protein sequence ID" value="AAF77370.1"/>
    <property type="molecule type" value="Genomic_DNA"/>
</dbReference>
<dbReference type="EMBL" id="AF200840">
    <property type="protein sequence ID" value="AAF77392.1"/>
    <property type="molecule type" value="Genomic_DNA"/>
</dbReference>
<dbReference type="EMBL" id="AF200841">
    <property type="protein sequence ID" value="AAF77406.1"/>
    <property type="molecule type" value="Genomic_DNA"/>
</dbReference>
<dbReference type="EMBL" id="AF200842">
    <property type="protein sequence ID" value="AAF77419.1"/>
    <property type="molecule type" value="Genomic_DNA"/>
</dbReference>
<dbReference type="EMBL" id="AF200843">
    <property type="protein sequence ID" value="AAF77432.1"/>
    <property type="molecule type" value="Genomic_DNA"/>
</dbReference>
<dbReference type="EMBL" id="AF200844">
    <property type="protein sequence ID" value="AAF77445.1"/>
    <property type="molecule type" value="Genomic_DNA"/>
</dbReference>
<dbReference type="EMBL" id="AF200845">
    <property type="protein sequence ID" value="AAF77458.1"/>
    <property type="molecule type" value="Genomic_DNA"/>
</dbReference>
<dbReference type="EMBL" id="AF200846">
    <property type="protein sequence ID" value="AAF77471.1"/>
    <property type="molecule type" value="Genomic_DNA"/>
</dbReference>
<dbReference type="EMBL" id="AF200847">
    <property type="protein sequence ID" value="AAF77484.1"/>
    <property type="molecule type" value="Genomic_DNA"/>
</dbReference>
<dbReference type="EMBL" id="AF200848">
    <property type="protein sequence ID" value="AAF77497.1"/>
    <property type="molecule type" value="Genomic_DNA"/>
</dbReference>
<dbReference type="EMBL" id="AF200849">
    <property type="protein sequence ID" value="AAF77500.1"/>
    <property type="molecule type" value="Genomic_DNA"/>
</dbReference>
<dbReference type="EMBL" id="AF200850">
    <property type="protein sequence ID" value="AAF77523.1"/>
    <property type="molecule type" value="Genomic_DNA"/>
</dbReference>
<dbReference type="EMBL" id="AF200851">
    <property type="protein sequence ID" value="AAF77526.1"/>
    <property type="molecule type" value="Genomic_DNA"/>
</dbReference>
<dbReference type="EMBL" id="AF200852">
    <property type="protein sequence ID" value="AAF77549.1"/>
    <property type="molecule type" value="Genomic_DNA"/>
</dbReference>
<dbReference type="EMBL" id="AF200853">
    <property type="protein sequence ID" value="AAF77562.1"/>
    <property type="molecule type" value="Genomic_DNA"/>
</dbReference>
<dbReference type="EMBL" id="AF200854">
    <property type="protein sequence ID" value="AAF77575.1"/>
    <property type="molecule type" value="Genomic_DNA"/>
</dbReference>
<dbReference type="EMBL" id="AY518670">
    <property type="protein sequence ID" value="AAR91392.1"/>
    <property type="molecule type" value="Genomic_DNA"/>
</dbReference>
<dbReference type="EMBL" id="AY518671">
    <property type="protein sequence ID" value="AAR91412.1"/>
    <property type="molecule type" value="Genomic_DNA"/>
</dbReference>
<dbReference type="EMBL" id="AY518672">
    <property type="protein sequence ID" value="AAR91425.1"/>
    <property type="molecule type" value="Genomic_DNA"/>
</dbReference>
<dbReference type="EMBL" id="AY518673">
    <property type="protein sequence ID" value="AAR91438.1"/>
    <property type="molecule type" value="Genomic_DNA"/>
</dbReference>
<dbReference type="EMBL" id="AY518674">
    <property type="protein sequence ID" value="AAR91451.1"/>
    <property type="molecule type" value="Genomic_DNA"/>
</dbReference>
<dbReference type="EMBL" id="AF164588">
    <property type="protein sequence ID" value="AAF81386.1"/>
    <property type="molecule type" value="Genomic_DNA"/>
</dbReference>
<dbReference type="RefSeq" id="NP_982333.1">
    <property type="nucleotide sequence ID" value="NC_005781.1"/>
</dbReference>
<dbReference type="SMR" id="Q9MDZ9"/>
<dbReference type="STRING" id="7240.Q9MDZ9"/>
<dbReference type="GeneID" id="2760965"/>
<dbReference type="KEGG" id="dsi:CYTB"/>
<dbReference type="CTD" id="4519"/>
<dbReference type="ChiTaRS" id="Cyt-b5-r">
    <property type="organism name" value="fly"/>
</dbReference>
<dbReference type="Proteomes" id="UP000000304">
    <property type="component" value="Mitochondrion"/>
</dbReference>
<dbReference type="GO" id="GO:0005743">
    <property type="term" value="C:mitochondrial inner membrane"/>
    <property type="evidence" value="ECO:0007669"/>
    <property type="project" value="UniProtKB-SubCell"/>
</dbReference>
<dbReference type="GO" id="GO:0045275">
    <property type="term" value="C:respiratory chain complex III"/>
    <property type="evidence" value="ECO:0007669"/>
    <property type="project" value="InterPro"/>
</dbReference>
<dbReference type="GO" id="GO:0046872">
    <property type="term" value="F:metal ion binding"/>
    <property type="evidence" value="ECO:0007669"/>
    <property type="project" value="UniProtKB-KW"/>
</dbReference>
<dbReference type="GO" id="GO:0008121">
    <property type="term" value="F:ubiquinol-cytochrome-c reductase activity"/>
    <property type="evidence" value="ECO:0007669"/>
    <property type="project" value="InterPro"/>
</dbReference>
<dbReference type="GO" id="GO:0006122">
    <property type="term" value="P:mitochondrial electron transport, ubiquinol to cytochrome c"/>
    <property type="evidence" value="ECO:0007669"/>
    <property type="project" value="TreeGrafter"/>
</dbReference>
<dbReference type="CDD" id="cd00290">
    <property type="entry name" value="cytochrome_b_C"/>
    <property type="match status" value="1"/>
</dbReference>
<dbReference type="CDD" id="cd00284">
    <property type="entry name" value="Cytochrome_b_N"/>
    <property type="match status" value="1"/>
</dbReference>
<dbReference type="FunFam" id="1.20.810.10:FF:000002">
    <property type="entry name" value="Cytochrome b"/>
    <property type="match status" value="1"/>
</dbReference>
<dbReference type="Gene3D" id="1.20.810.10">
    <property type="entry name" value="Cytochrome Bc1 Complex, Chain C"/>
    <property type="match status" value="1"/>
</dbReference>
<dbReference type="InterPro" id="IPR005798">
    <property type="entry name" value="Cyt_b/b6_C"/>
</dbReference>
<dbReference type="InterPro" id="IPR036150">
    <property type="entry name" value="Cyt_b/b6_C_sf"/>
</dbReference>
<dbReference type="InterPro" id="IPR005797">
    <property type="entry name" value="Cyt_b/b6_N"/>
</dbReference>
<dbReference type="InterPro" id="IPR027387">
    <property type="entry name" value="Cytb/b6-like_sf"/>
</dbReference>
<dbReference type="InterPro" id="IPR030689">
    <property type="entry name" value="Cytochrome_b"/>
</dbReference>
<dbReference type="InterPro" id="IPR048260">
    <property type="entry name" value="Cytochrome_b_C_euk/bac"/>
</dbReference>
<dbReference type="InterPro" id="IPR048259">
    <property type="entry name" value="Cytochrome_b_N_euk/bac"/>
</dbReference>
<dbReference type="InterPro" id="IPR016174">
    <property type="entry name" value="Di-haem_cyt_TM"/>
</dbReference>
<dbReference type="PANTHER" id="PTHR19271">
    <property type="entry name" value="CYTOCHROME B"/>
    <property type="match status" value="1"/>
</dbReference>
<dbReference type="PANTHER" id="PTHR19271:SF16">
    <property type="entry name" value="CYTOCHROME B"/>
    <property type="match status" value="1"/>
</dbReference>
<dbReference type="Pfam" id="PF00032">
    <property type="entry name" value="Cytochrom_B_C"/>
    <property type="match status" value="1"/>
</dbReference>
<dbReference type="Pfam" id="PF00033">
    <property type="entry name" value="Cytochrome_B"/>
    <property type="match status" value="1"/>
</dbReference>
<dbReference type="PIRSF" id="PIRSF038885">
    <property type="entry name" value="COB"/>
    <property type="match status" value="1"/>
</dbReference>
<dbReference type="SUPFAM" id="SSF81648">
    <property type="entry name" value="a domain/subunit of cytochrome bc1 complex (Ubiquinol-cytochrome c reductase)"/>
    <property type="match status" value="1"/>
</dbReference>
<dbReference type="SUPFAM" id="SSF81342">
    <property type="entry name" value="Transmembrane di-heme cytochromes"/>
    <property type="match status" value="1"/>
</dbReference>
<dbReference type="PROSITE" id="PS51003">
    <property type="entry name" value="CYTB_CTER"/>
    <property type="match status" value="1"/>
</dbReference>
<dbReference type="PROSITE" id="PS51002">
    <property type="entry name" value="CYTB_NTER"/>
    <property type="match status" value="1"/>
</dbReference>
<protein>
    <recommendedName>
        <fullName>Cytochrome b</fullName>
    </recommendedName>
    <alternativeName>
        <fullName>Complex III subunit 3</fullName>
    </alternativeName>
    <alternativeName>
        <fullName>Complex III subunit III</fullName>
    </alternativeName>
    <alternativeName>
        <fullName>Cytochrome b-c1 complex subunit 3</fullName>
    </alternativeName>
    <alternativeName>
        <fullName>Ubiquinol-cytochrome-c reductase complex cytochrome b subunit</fullName>
    </alternativeName>
</protein>
<organism evidence="7">
    <name type="scientific">Drosophila simulans</name>
    <name type="common">Fruit fly</name>
    <dbReference type="NCBI Taxonomy" id="7240"/>
    <lineage>
        <taxon>Eukaryota</taxon>
        <taxon>Metazoa</taxon>
        <taxon>Ecdysozoa</taxon>
        <taxon>Arthropoda</taxon>
        <taxon>Hexapoda</taxon>
        <taxon>Insecta</taxon>
        <taxon>Pterygota</taxon>
        <taxon>Neoptera</taxon>
        <taxon>Endopterygota</taxon>
        <taxon>Diptera</taxon>
        <taxon>Brachycera</taxon>
        <taxon>Muscomorpha</taxon>
        <taxon>Ephydroidea</taxon>
        <taxon>Drosophilidae</taxon>
        <taxon>Drosophila</taxon>
        <taxon>Sophophora</taxon>
    </lineage>
</organism>